<keyword id="KW-0687">Ribonucleoprotein</keyword>
<keyword id="KW-0689">Ribosomal protein</keyword>
<keyword id="KW-0694">RNA-binding</keyword>
<keyword id="KW-0699">rRNA-binding</keyword>
<keyword id="KW-0820">tRNA-binding</keyword>
<organism>
    <name type="scientific">Moorella thermoacetica (strain ATCC 39073 / JCM 9320)</name>
    <dbReference type="NCBI Taxonomy" id="264732"/>
    <lineage>
        <taxon>Bacteria</taxon>
        <taxon>Bacillati</taxon>
        <taxon>Bacillota</taxon>
        <taxon>Clostridia</taxon>
        <taxon>Moorellales</taxon>
        <taxon>Moorellaceae</taxon>
        <taxon>Moorella</taxon>
    </lineage>
</organism>
<reference key="1">
    <citation type="journal article" date="2008" name="Environ. Microbiol.">
        <title>The complete genome sequence of Moorella thermoacetica (f. Clostridium thermoaceticum).</title>
        <authorList>
            <person name="Pierce E."/>
            <person name="Xie G."/>
            <person name="Barabote R.D."/>
            <person name="Saunders E."/>
            <person name="Han C.S."/>
            <person name="Detter J.C."/>
            <person name="Richardson P."/>
            <person name="Brettin T.S."/>
            <person name="Das A."/>
            <person name="Ljungdahl L.G."/>
            <person name="Ragsdale S.W."/>
        </authorList>
    </citation>
    <scope>NUCLEOTIDE SEQUENCE [LARGE SCALE GENOMIC DNA]</scope>
    <source>
        <strain>ATCC 39073 / JCM 9320</strain>
    </source>
</reference>
<dbReference type="EMBL" id="CP000232">
    <property type="protein sequence ID" value="ABC20735.1"/>
    <property type="molecule type" value="Genomic_DNA"/>
</dbReference>
<dbReference type="RefSeq" id="YP_431278.1">
    <property type="nucleotide sequence ID" value="NC_007644.1"/>
</dbReference>
<dbReference type="SMR" id="Q2RFQ4"/>
<dbReference type="STRING" id="264732.Moth_2453"/>
<dbReference type="EnsemblBacteria" id="ABC20735">
    <property type="protein sequence ID" value="ABC20735"/>
    <property type="gene ID" value="Moth_2453"/>
</dbReference>
<dbReference type="KEGG" id="mta:Moth_2453"/>
<dbReference type="PATRIC" id="fig|264732.11.peg.2671"/>
<dbReference type="eggNOG" id="COG0197">
    <property type="taxonomic scope" value="Bacteria"/>
</dbReference>
<dbReference type="HOGENOM" id="CLU_078858_2_1_9"/>
<dbReference type="OrthoDB" id="9802589at2"/>
<dbReference type="GO" id="GO:0022625">
    <property type="term" value="C:cytosolic large ribosomal subunit"/>
    <property type="evidence" value="ECO:0007669"/>
    <property type="project" value="TreeGrafter"/>
</dbReference>
<dbReference type="GO" id="GO:0019843">
    <property type="term" value="F:rRNA binding"/>
    <property type="evidence" value="ECO:0007669"/>
    <property type="project" value="UniProtKB-UniRule"/>
</dbReference>
<dbReference type="GO" id="GO:0003735">
    <property type="term" value="F:structural constituent of ribosome"/>
    <property type="evidence" value="ECO:0007669"/>
    <property type="project" value="InterPro"/>
</dbReference>
<dbReference type="GO" id="GO:0000049">
    <property type="term" value="F:tRNA binding"/>
    <property type="evidence" value="ECO:0007669"/>
    <property type="project" value="UniProtKB-KW"/>
</dbReference>
<dbReference type="GO" id="GO:0006412">
    <property type="term" value="P:translation"/>
    <property type="evidence" value="ECO:0007669"/>
    <property type="project" value="UniProtKB-UniRule"/>
</dbReference>
<dbReference type="CDD" id="cd01433">
    <property type="entry name" value="Ribosomal_L16_L10e"/>
    <property type="match status" value="1"/>
</dbReference>
<dbReference type="FunFam" id="3.90.1170.10:FF:000001">
    <property type="entry name" value="50S ribosomal protein L16"/>
    <property type="match status" value="1"/>
</dbReference>
<dbReference type="Gene3D" id="3.90.1170.10">
    <property type="entry name" value="Ribosomal protein L10e/L16"/>
    <property type="match status" value="1"/>
</dbReference>
<dbReference type="HAMAP" id="MF_01342">
    <property type="entry name" value="Ribosomal_uL16"/>
    <property type="match status" value="1"/>
</dbReference>
<dbReference type="InterPro" id="IPR047873">
    <property type="entry name" value="Ribosomal_uL16"/>
</dbReference>
<dbReference type="InterPro" id="IPR000114">
    <property type="entry name" value="Ribosomal_uL16_bact-type"/>
</dbReference>
<dbReference type="InterPro" id="IPR020798">
    <property type="entry name" value="Ribosomal_uL16_CS"/>
</dbReference>
<dbReference type="InterPro" id="IPR016180">
    <property type="entry name" value="Ribosomal_uL16_dom"/>
</dbReference>
<dbReference type="InterPro" id="IPR036920">
    <property type="entry name" value="Ribosomal_uL16_sf"/>
</dbReference>
<dbReference type="NCBIfam" id="TIGR01164">
    <property type="entry name" value="rplP_bact"/>
    <property type="match status" value="1"/>
</dbReference>
<dbReference type="PANTHER" id="PTHR12220">
    <property type="entry name" value="50S/60S RIBOSOMAL PROTEIN L16"/>
    <property type="match status" value="1"/>
</dbReference>
<dbReference type="PANTHER" id="PTHR12220:SF13">
    <property type="entry name" value="LARGE RIBOSOMAL SUBUNIT PROTEIN UL16M"/>
    <property type="match status" value="1"/>
</dbReference>
<dbReference type="Pfam" id="PF00252">
    <property type="entry name" value="Ribosomal_L16"/>
    <property type="match status" value="1"/>
</dbReference>
<dbReference type="PRINTS" id="PR00060">
    <property type="entry name" value="RIBOSOMALL16"/>
</dbReference>
<dbReference type="SUPFAM" id="SSF54686">
    <property type="entry name" value="Ribosomal protein L16p/L10e"/>
    <property type="match status" value="1"/>
</dbReference>
<dbReference type="PROSITE" id="PS00586">
    <property type="entry name" value="RIBOSOMAL_L16_1"/>
    <property type="match status" value="1"/>
</dbReference>
<dbReference type="PROSITE" id="PS00701">
    <property type="entry name" value="RIBOSOMAL_L16_2"/>
    <property type="match status" value="1"/>
</dbReference>
<sequence length="144" mass="15966">MLMPKRVKYRKPHRPGTQGKATRGNEVTFGDYGLQALEPAWITSRQIEASRIAMTRYIKRGGKVWIKIFPDTPITAKPAETRMGSGKGAPEYWVAVVKPGRILFEMAGVSEEVAREAMRLAAHKLPIKTKFVKRTGLGGDANEG</sequence>
<proteinExistence type="inferred from homology"/>
<name>RL16_MOOTA</name>
<feature type="chain" id="PRO_0000251647" description="Large ribosomal subunit protein uL16">
    <location>
        <begin position="1"/>
        <end position="144"/>
    </location>
</feature>
<feature type="region of interest" description="Disordered" evidence="2">
    <location>
        <begin position="1"/>
        <end position="25"/>
    </location>
</feature>
<feature type="compositionally biased region" description="Basic residues" evidence="2">
    <location>
        <begin position="1"/>
        <end position="14"/>
    </location>
</feature>
<comment type="function">
    <text evidence="1">Binds 23S rRNA and is also seen to make contacts with the A and possibly P site tRNAs.</text>
</comment>
<comment type="subunit">
    <text evidence="1">Part of the 50S ribosomal subunit.</text>
</comment>
<comment type="similarity">
    <text evidence="1">Belongs to the universal ribosomal protein uL16 family.</text>
</comment>
<gene>
    <name evidence="1" type="primary">rplP</name>
    <name type="ordered locus">Moth_2453</name>
</gene>
<evidence type="ECO:0000255" key="1">
    <source>
        <dbReference type="HAMAP-Rule" id="MF_01342"/>
    </source>
</evidence>
<evidence type="ECO:0000256" key="2">
    <source>
        <dbReference type="SAM" id="MobiDB-lite"/>
    </source>
</evidence>
<evidence type="ECO:0000305" key="3"/>
<accession>Q2RFQ4</accession>
<protein>
    <recommendedName>
        <fullName evidence="1">Large ribosomal subunit protein uL16</fullName>
    </recommendedName>
    <alternativeName>
        <fullName evidence="3">50S ribosomal protein L16</fullName>
    </alternativeName>
</protein>